<name>SYR_SYNJA</name>
<accession>Q2JRC3</accession>
<organism>
    <name type="scientific">Synechococcus sp. (strain JA-3-3Ab)</name>
    <name type="common">Cyanobacteria bacterium Yellowstone A-Prime</name>
    <dbReference type="NCBI Taxonomy" id="321327"/>
    <lineage>
        <taxon>Bacteria</taxon>
        <taxon>Bacillati</taxon>
        <taxon>Cyanobacteriota</taxon>
        <taxon>Cyanophyceae</taxon>
        <taxon>Synechococcales</taxon>
        <taxon>Synechococcaceae</taxon>
        <taxon>Synechococcus</taxon>
    </lineage>
</organism>
<comment type="catalytic activity">
    <reaction evidence="1">
        <text>tRNA(Arg) + L-arginine + ATP = L-arginyl-tRNA(Arg) + AMP + diphosphate</text>
        <dbReference type="Rhea" id="RHEA:20301"/>
        <dbReference type="Rhea" id="RHEA-COMP:9658"/>
        <dbReference type="Rhea" id="RHEA-COMP:9673"/>
        <dbReference type="ChEBI" id="CHEBI:30616"/>
        <dbReference type="ChEBI" id="CHEBI:32682"/>
        <dbReference type="ChEBI" id="CHEBI:33019"/>
        <dbReference type="ChEBI" id="CHEBI:78442"/>
        <dbReference type="ChEBI" id="CHEBI:78513"/>
        <dbReference type="ChEBI" id="CHEBI:456215"/>
        <dbReference type="EC" id="6.1.1.19"/>
    </reaction>
</comment>
<comment type="subunit">
    <text evidence="1">Monomer.</text>
</comment>
<comment type="subcellular location">
    <subcellularLocation>
        <location evidence="1">Cytoplasm</location>
    </subcellularLocation>
</comment>
<comment type="similarity">
    <text evidence="1">Belongs to the class-I aminoacyl-tRNA synthetase family.</text>
</comment>
<feature type="chain" id="PRO_0000242107" description="Arginine--tRNA ligase">
    <location>
        <begin position="1"/>
        <end position="598"/>
    </location>
</feature>
<feature type="short sequence motif" description="'HIGH' region">
    <location>
        <begin position="140"/>
        <end position="150"/>
    </location>
</feature>
<sequence length="598" mass="66889">MATQPLSTSLVRFLTAAVSESIRRASEAGQLGSLTLEQAAGVAPTIQIPSDPRYGDYACPTPLGMAKLCRMAPAQIAQTLQKHLDLPGIATEVAGGGYLNFRLGDSFLAERLQELLRLGEDFGKTAAPHPERILLEYVSANPTGPLHVGHGRWAAVGSTLANLLRWTGHQVEREFYINDAGNQMRLLGQSLEVRVRQLQGEEVALPEDAYHGSYLVDIARRLLDQVKAGIRPLPTTPEEYTDFAYAEMLAWQKQTLQQLRTEFDHWFSERRLHAPDPQTGLSAIQQALQELQERGFLYRAKAPRGEDPKPGAEEAVYFKTQEFGDDKDRVVQKADGSFTYLAADIAYHRDKVRRGYQRLINILGSDHHGYIGRLHAAVGAFSPDVKLEILIGQFVKLFKTDPETGEKTEVRMSKRTGNFVSLNDLIDDPEIGVGVDAARWFLLSSSMDSPINFDLDLAVKQTFDNPVVYVHYSHARCCTLLRRLQEEEKVELTNKVTLTEQQKLPYQEPEERALLLRLLALPDELIAAAEERAPHKIIRYAEAIAADFNKFYDNCRILPLLKEDPLLAQARIQLVQATRQVLFNVLTGILGLSAPESM</sequence>
<protein>
    <recommendedName>
        <fullName evidence="1">Arginine--tRNA ligase</fullName>
        <ecNumber evidence="1">6.1.1.19</ecNumber>
    </recommendedName>
    <alternativeName>
        <fullName evidence="1">Arginyl-tRNA synthetase</fullName>
        <shortName evidence="1">ArgRS</shortName>
    </alternativeName>
</protein>
<reference key="1">
    <citation type="journal article" date="2007" name="ISME J.">
        <title>Population level functional diversity in a microbial community revealed by comparative genomic and metagenomic analyses.</title>
        <authorList>
            <person name="Bhaya D."/>
            <person name="Grossman A.R."/>
            <person name="Steunou A.-S."/>
            <person name="Khuri N."/>
            <person name="Cohan F.M."/>
            <person name="Hamamura N."/>
            <person name="Melendrez M.C."/>
            <person name="Bateson M.M."/>
            <person name="Ward D.M."/>
            <person name="Heidelberg J.F."/>
        </authorList>
    </citation>
    <scope>NUCLEOTIDE SEQUENCE [LARGE SCALE GENOMIC DNA]</scope>
    <source>
        <strain>JA-3-3Ab</strain>
    </source>
</reference>
<gene>
    <name evidence="1" type="primary">argS</name>
    <name type="ordered locus">CYA_2732</name>
</gene>
<evidence type="ECO:0000255" key="1">
    <source>
        <dbReference type="HAMAP-Rule" id="MF_00123"/>
    </source>
</evidence>
<keyword id="KW-0030">Aminoacyl-tRNA synthetase</keyword>
<keyword id="KW-0067">ATP-binding</keyword>
<keyword id="KW-0963">Cytoplasm</keyword>
<keyword id="KW-0436">Ligase</keyword>
<keyword id="KW-0547">Nucleotide-binding</keyword>
<keyword id="KW-0648">Protein biosynthesis</keyword>
<dbReference type="EC" id="6.1.1.19" evidence="1"/>
<dbReference type="EMBL" id="CP000239">
    <property type="protein sequence ID" value="ABD00836.1"/>
    <property type="molecule type" value="Genomic_DNA"/>
</dbReference>
<dbReference type="RefSeq" id="WP_011431507.1">
    <property type="nucleotide sequence ID" value="NC_007775.1"/>
</dbReference>
<dbReference type="SMR" id="Q2JRC3"/>
<dbReference type="STRING" id="321327.CYA_2732"/>
<dbReference type="KEGG" id="cya:CYA_2732"/>
<dbReference type="eggNOG" id="COG0018">
    <property type="taxonomic scope" value="Bacteria"/>
</dbReference>
<dbReference type="HOGENOM" id="CLU_006406_0_1_3"/>
<dbReference type="OrthoDB" id="9805987at2"/>
<dbReference type="Proteomes" id="UP000008818">
    <property type="component" value="Chromosome"/>
</dbReference>
<dbReference type="GO" id="GO:0005737">
    <property type="term" value="C:cytoplasm"/>
    <property type="evidence" value="ECO:0007669"/>
    <property type="project" value="UniProtKB-SubCell"/>
</dbReference>
<dbReference type="GO" id="GO:0004814">
    <property type="term" value="F:arginine-tRNA ligase activity"/>
    <property type="evidence" value="ECO:0007669"/>
    <property type="project" value="UniProtKB-UniRule"/>
</dbReference>
<dbReference type="GO" id="GO:0005524">
    <property type="term" value="F:ATP binding"/>
    <property type="evidence" value="ECO:0007669"/>
    <property type="project" value="UniProtKB-UniRule"/>
</dbReference>
<dbReference type="GO" id="GO:0006420">
    <property type="term" value="P:arginyl-tRNA aminoacylation"/>
    <property type="evidence" value="ECO:0007669"/>
    <property type="project" value="UniProtKB-UniRule"/>
</dbReference>
<dbReference type="CDD" id="cd00671">
    <property type="entry name" value="ArgRS_core"/>
    <property type="match status" value="1"/>
</dbReference>
<dbReference type="FunFam" id="3.40.50.620:FF:000062">
    <property type="entry name" value="Arginine--tRNA ligase"/>
    <property type="match status" value="1"/>
</dbReference>
<dbReference type="Gene3D" id="3.30.1360.70">
    <property type="entry name" value="Arginyl tRNA synthetase N-terminal domain"/>
    <property type="match status" value="1"/>
</dbReference>
<dbReference type="Gene3D" id="3.40.50.620">
    <property type="entry name" value="HUPs"/>
    <property type="match status" value="1"/>
</dbReference>
<dbReference type="Gene3D" id="1.10.730.10">
    <property type="entry name" value="Isoleucyl-tRNA Synthetase, Domain 1"/>
    <property type="match status" value="1"/>
</dbReference>
<dbReference type="HAMAP" id="MF_00123">
    <property type="entry name" value="Arg_tRNA_synth"/>
    <property type="match status" value="1"/>
</dbReference>
<dbReference type="InterPro" id="IPR001412">
    <property type="entry name" value="aa-tRNA-synth_I_CS"/>
</dbReference>
<dbReference type="InterPro" id="IPR001278">
    <property type="entry name" value="Arg-tRNA-ligase"/>
</dbReference>
<dbReference type="InterPro" id="IPR005148">
    <property type="entry name" value="Arg-tRNA-synth_N"/>
</dbReference>
<dbReference type="InterPro" id="IPR036695">
    <property type="entry name" value="Arg-tRNA-synth_N_sf"/>
</dbReference>
<dbReference type="InterPro" id="IPR035684">
    <property type="entry name" value="ArgRS_core"/>
</dbReference>
<dbReference type="InterPro" id="IPR008909">
    <property type="entry name" value="DALR_anticod-bd"/>
</dbReference>
<dbReference type="InterPro" id="IPR014729">
    <property type="entry name" value="Rossmann-like_a/b/a_fold"/>
</dbReference>
<dbReference type="InterPro" id="IPR009080">
    <property type="entry name" value="tRNAsynth_Ia_anticodon-bd"/>
</dbReference>
<dbReference type="NCBIfam" id="TIGR00456">
    <property type="entry name" value="argS"/>
    <property type="match status" value="1"/>
</dbReference>
<dbReference type="PANTHER" id="PTHR11956:SF5">
    <property type="entry name" value="ARGININE--TRNA LIGASE, CYTOPLASMIC"/>
    <property type="match status" value="1"/>
</dbReference>
<dbReference type="PANTHER" id="PTHR11956">
    <property type="entry name" value="ARGINYL-TRNA SYNTHETASE"/>
    <property type="match status" value="1"/>
</dbReference>
<dbReference type="Pfam" id="PF03485">
    <property type="entry name" value="Arg_tRNA_synt_N"/>
    <property type="match status" value="1"/>
</dbReference>
<dbReference type="Pfam" id="PF05746">
    <property type="entry name" value="DALR_1"/>
    <property type="match status" value="1"/>
</dbReference>
<dbReference type="Pfam" id="PF00750">
    <property type="entry name" value="tRNA-synt_1d"/>
    <property type="match status" value="1"/>
</dbReference>
<dbReference type="PRINTS" id="PR01038">
    <property type="entry name" value="TRNASYNTHARG"/>
</dbReference>
<dbReference type="SMART" id="SM01016">
    <property type="entry name" value="Arg_tRNA_synt_N"/>
    <property type="match status" value="1"/>
</dbReference>
<dbReference type="SMART" id="SM00836">
    <property type="entry name" value="DALR_1"/>
    <property type="match status" value="1"/>
</dbReference>
<dbReference type="SUPFAM" id="SSF47323">
    <property type="entry name" value="Anticodon-binding domain of a subclass of class I aminoacyl-tRNA synthetases"/>
    <property type="match status" value="1"/>
</dbReference>
<dbReference type="SUPFAM" id="SSF55190">
    <property type="entry name" value="Arginyl-tRNA synthetase (ArgRS), N-terminal 'additional' domain"/>
    <property type="match status" value="1"/>
</dbReference>
<dbReference type="SUPFAM" id="SSF52374">
    <property type="entry name" value="Nucleotidylyl transferase"/>
    <property type="match status" value="1"/>
</dbReference>
<dbReference type="PROSITE" id="PS00178">
    <property type="entry name" value="AA_TRNA_LIGASE_I"/>
    <property type="match status" value="1"/>
</dbReference>
<proteinExistence type="inferred from homology"/>